<keyword id="KW-0560">Oxidoreductase</keyword>
<keyword id="KW-1185">Reference proteome</keyword>
<sequence>MPFIPNTDADRATMLQAVGASTFDDLISNIPEKVRFKGALNLPEALSEMEVLEELNALANANQDTQKVTSFLGGGAYDHFVPSAIGAIISRSEFYTAYTPYQAEVSQGTLQAMYEFQTMVARLTGMDVANASMYDGATALAEAMLLSVAHKNRKEVVLAGKINPNAVAIMQTYGHGQEIHIRQSALENGGADLASVRELVSDKTAAMIVQHPNFFGCLEDVHELQKIAAENNALFIVSADPISLGILEAPGNYGADIVVGEGQGLGNTQSFGGPYLGLFAAKSQLLRKIPGRLSGMTVDKDGNQGFILTLQTREQHIRREKATSNICTNQALNALCACIYMSMMGKEGLTQVASLSIQKAHYLANEIQKLDGFKLKFSRPFFKEFAIELPIPASQAIAKLLEKKIHAGVDLKMAEENGLLIAVTEKRSKAEMNSFVEALKELC</sequence>
<comment type="function">
    <text evidence="1">The glycine cleavage system catalyzes the degradation of glycine. The P protein binds the alpha-amino group of glycine through its pyridoxal phosphate cofactor; CO(2) is released and the remaining methylamine moiety is then transferred to the lipoamide cofactor of the H protein.</text>
</comment>
<comment type="catalytic activity">
    <reaction evidence="1">
        <text>N(6)-[(R)-lipoyl]-L-lysyl-[glycine-cleavage complex H protein] + glycine + H(+) = N(6)-[(R)-S(8)-aminomethyldihydrolipoyl]-L-lysyl-[glycine-cleavage complex H protein] + CO2</text>
        <dbReference type="Rhea" id="RHEA:24304"/>
        <dbReference type="Rhea" id="RHEA-COMP:10494"/>
        <dbReference type="Rhea" id="RHEA-COMP:10495"/>
        <dbReference type="ChEBI" id="CHEBI:15378"/>
        <dbReference type="ChEBI" id="CHEBI:16526"/>
        <dbReference type="ChEBI" id="CHEBI:57305"/>
        <dbReference type="ChEBI" id="CHEBI:83099"/>
        <dbReference type="ChEBI" id="CHEBI:83143"/>
        <dbReference type="EC" id="1.4.4.2"/>
    </reaction>
</comment>
<comment type="subunit">
    <text evidence="1">The glycine cleavage system is composed of four proteins: P, T, L and H. In this organism, the P 'protein' is a heterodimer of two subunits.</text>
</comment>
<comment type="similarity">
    <text evidence="1">Belongs to the GcvP family. N-terminal subunit subfamily.</text>
</comment>
<accession>B3QUT6</accession>
<name>GCSPA_CHLT3</name>
<dbReference type="EC" id="1.4.4.2" evidence="1"/>
<dbReference type="EMBL" id="CP001100">
    <property type="protein sequence ID" value="ACF14437.1"/>
    <property type="molecule type" value="Genomic_DNA"/>
</dbReference>
<dbReference type="RefSeq" id="WP_012500520.1">
    <property type="nucleotide sequence ID" value="NC_011026.1"/>
</dbReference>
<dbReference type="SMR" id="B3QUT6"/>
<dbReference type="STRING" id="517418.Ctha_1983"/>
<dbReference type="KEGG" id="cts:Ctha_1983"/>
<dbReference type="eggNOG" id="COG0403">
    <property type="taxonomic scope" value="Bacteria"/>
</dbReference>
<dbReference type="HOGENOM" id="CLU_004620_0_2_10"/>
<dbReference type="OrthoDB" id="9801272at2"/>
<dbReference type="Proteomes" id="UP000001208">
    <property type="component" value="Chromosome"/>
</dbReference>
<dbReference type="GO" id="GO:0004375">
    <property type="term" value="F:glycine dehydrogenase (decarboxylating) activity"/>
    <property type="evidence" value="ECO:0007669"/>
    <property type="project" value="UniProtKB-EC"/>
</dbReference>
<dbReference type="GO" id="GO:0019464">
    <property type="term" value="P:glycine decarboxylation via glycine cleavage system"/>
    <property type="evidence" value="ECO:0007669"/>
    <property type="project" value="UniProtKB-UniRule"/>
</dbReference>
<dbReference type="GO" id="GO:0009116">
    <property type="term" value="P:nucleoside metabolic process"/>
    <property type="evidence" value="ECO:0007669"/>
    <property type="project" value="InterPro"/>
</dbReference>
<dbReference type="CDD" id="cd00613">
    <property type="entry name" value="GDC-P"/>
    <property type="match status" value="1"/>
</dbReference>
<dbReference type="Gene3D" id="3.90.1150.10">
    <property type="entry name" value="Aspartate Aminotransferase, domain 1"/>
    <property type="match status" value="1"/>
</dbReference>
<dbReference type="Gene3D" id="3.40.640.10">
    <property type="entry name" value="Type I PLP-dependent aspartate aminotransferase-like (Major domain)"/>
    <property type="match status" value="1"/>
</dbReference>
<dbReference type="HAMAP" id="MF_00712">
    <property type="entry name" value="GcvPA"/>
    <property type="match status" value="1"/>
</dbReference>
<dbReference type="InterPro" id="IPR023010">
    <property type="entry name" value="GcvPA"/>
</dbReference>
<dbReference type="InterPro" id="IPR049315">
    <property type="entry name" value="GDC-P_N"/>
</dbReference>
<dbReference type="InterPro" id="IPR020581">
    <property type="entry name" value="GDC_P"/>
</dbReference>
<dbReference type="InterPro" id="IPR015424">
    <property type="entry name" value="PyrdxlP-dep_Trfase"/>
</dbReference>
<dbReference type="InterPro" id="IPR015421">
    <property type="entry name" value="PyrdxlP-dep_Trfase_major"/>
</dbReference>
<dbReference type="InterPro" id="IPR015422">
    <property type="entry name" value="PyrdxlP-dep_Trfase_small"/>
</dbReference>
<dbReference type="NCBIfam" id="NF001696">
    <property type="entry name" value="PRK00451.1"/>
    <property type="match status" value="1"/>
</dbReference>
<dbReference type="PANTHER" id="PTHR42806">
    <property type="entry name" value="GLYCINE CLEAVAGE SYSTEM P-PROTEIN"/>
    <property type="match status" value="1"/>
</dbReference>
<dbReference type="PANTHER" id="PTHR42806:SF1">
    <property type="entry name" value="GLYCINE DEHYDROGENASE (DECARBOXYLATING)"/>
    <property type="match status" value="1"/>
</dbReference>
<dbReference type="Pfam" id="PF02347">
    <property type="entry name" value="GDC-P"/>
    <property type="match status" value="1"/>
</dbReference>
<dbReference type="PIRSF" id="PIRSF006815">
    <property type="entry name" value="GcvPA"/>
    <property type="match status" value="1"/>
</dbReference>
<dbReference type="SUPFAM" id="SSF53383">
    <property type="entry name" value="PLP-dependent transferases"/>
    <property type="match status" value="1"/>
</dbReference>
<evidence type="ECO:0000255" key="1">
    <source>
        <dbReference type="HAMAP-Rule" id="MF_00712"/>
    </source>
</evidence>
<protein>
    <recommendedName>
        <fullName evidence="1">Probable glycine dehydrogenase (decarboxylating) subunit 1</fullName>
        <ecNumber evidence="1">1.4.4.2</ecNumber>
    </recommendedName>
    <alternativeName>
        <fullName evidence="1">Glycine cleavage system P-protein subunit 1</fullName>
    </alternativeName>
    <alternativeName>
        <fullName evidence="1">Glycine decarboxylase subunit 1</fullName>
    </alternativeName>
    <alternativeName>
        <fullName evidence="1">Glycine dehydrogenase (aminomethyl-transferring) subunit 1</fullName>
    </alternativeName>
</protein>
<proteinExistence type="inferred from homology"/>
<gene>
    <name evidence="1" type="primary">gcvPA</name>
    <name type="ordered locus">Ctha_1983</name>
</gene>
<reference key="1">
    <citation type="submission" date="2008-06" db="EMBL/GenBank/DDBJ databases">
        <title>Complete sequence of Chloroherpeton thalassium ATCC 35110.</title>
        <authorList>
            <consortium name="US DOE Joint Genome Institute"/>
            <person name="Lucas S."/>
            <person name="Copeland A."/>
            <person name="Lapidus A."/>
            <person name="Glavina del Rio T."/>
            <person name="Dalin E."/>
            <person name="Tice H."/>
            <person name="Bruce D."/>
            <person name="Goodwin L."/>
            <person name="Pitluck S."/>
            <person name="Schmutz J."/>
            <person name="Larimer F."/>
            <person name="Land M."/>
            <person name="Hauser L."/>
            <person name="Kyrpides N."/>
            <person name="Mikhailova N."/>
            <person name="Liu Z."/>
            <person name="Li T."/>
            <person name="Zhao F."/>
            <person name="Overmann J."/>
            <person name="Bryant D.A."/>
            <person name="Richardson P."/>
        </authorList>
    </citation>
    <scope>NUCLEOTIDE SEQUENCE [LARGE SCALE GENOMIC DNA]</scope>
    <source>
        <strain>ATCC 35110 / GB-78</strain>
    </source>
</reference>
<feature type="chain" id="PRO_1000132475" description="Probable glycine dehydrogenase (decarboxylating) subunit 1">
    <location>
        <begin position="1"/>
        <end position="443"/>
    </location>
</feature>
<organism>
    <name type="scientific">Chloroherpeton thalassium (strain ATCC 35110 / GB-78)</name>
    <dbReference type="NCBI Taxonomy" id="517418"/>
    <lineage>
        <taxon>Bacteria</taxon>
        <taxon>Pseudomonadati</taxon>
        <taxon>Chlorobiota</taxon>
        <taxon>Chlorobiia</taxon>
        <taxon>Chlorobiales</taxon>
        <taxon>Chloroherpetonaceae</taxon>
        <taxon>Chloroherpeton</taxon>
    </lineage>
</organism>